<keyword id="KW-0012">Acyltransferase</keyword>
<keyword id="KW-0808">Transferase</keyword>
<feature type="chain" id="PRO_0000206426" description="Putative acetyl-CoA C-acetyltransferase VraB">
    <location>
        <begin position="1"/>
        <end position="379"/>
    </location>
</feature>
<feature type="active site" description="Acyl-thioester intermediate" evidence="1">
    <location>
        <position position="86"/>
    </location>
</feature>
<feature type="active site" description="Proton acceptor" evidence="1">
    <location>
        <position position="338"/>
    </location>
</feature>
<accession>Q5HIA0</accession>
<comment type="similarity">
    <text evidence="2">Belongs to the thiolase-like superfamily. Thiolase family.</text>
</comment>
<reference key="1">
    <citation type="journal article" date="2005" name="J. Bacteriol.">
        <title>Insights on evolution of virulence and resistance from the complete genome analysis of an early methicillin-resistant Staphylococcus aureus strain and a biofilm-producing methicillin-resistant Staphylococcus epidermidis strain.</title>
        <authorList>
            <person name="Gill S.R."/>
            <person name="Fouts D.E."/>
            <person name="Archer G.L."/>
            <person name="Mongodin E.F."/>
            <person name="DeBoy R.T."/>
            <person name="Ravel J."/>
            <person name="Paulsen I.T."/>
            <person name="Kolonay J.F."/>
            <person name="Brinkac L.M."/>
            <person name="Beanan M.J."/>
            <person name="Dodson R.J."/>
            <person name="Daugherty S.C."/>
            <person name="Madupu R."/>
            <person name="Angiuoli S.V."/>
            <person name="Durkin A.S."/>
            <person name="Haft D.H."/>
            <person name="Vamathevan J.J."/>
            <person name="Khouri H."/>
            <person name="Utterback T.R."/>
            <person name="Lee C."/>
            <person name="Dimitrov G."/>
            <person name="Jiang L."/>
            <person name="Qin H."/>
            <person name="Weidman J."/>
            <person name="Tran K."/>
            <person name="Kang K.H."/>
            <person name="Hance I.R."/>
            <person name="Nelson K.E."/>
            <person name="Fraser C.M."/>
        </authorList>
    </citation>
    <scope>NUCLEOTIDE SEQUENCE [LARGE SCALE GENOMIC DNA]</scope>
    <source>
        <strain>COL</strain>
    </source>
</reference>
<dbReference type="EC" id="2.3.1.-"/>
<dbReference type="EMBL" id="CP000046">
    <property type="protein sequence ID" value="AAW37731.1"/>
    <property type="molecule type" value="Genomic_DNA"/>
</dbReference>
<dbReference type="RefSeq" id="WP_001070681.1">
    <property type="nucleotide sequence ID" value="NC_002951.2"/>
</dbReference>
<dbReference type="SMR" id="Q5HIA0"/>
<dbReference type="KEGG" id="sac:SACOL0622"/>
<dbReference type="HOGENOM" id="CLU_031026_2_1_9"/>
<dbReference type="Proteomes" id="UP000000530">
    <property type="component" value="Chromosome"/>
</dbReference>
<dbReference type="GO" id="GO:0005737">
    <property type="term" value="C:cytoplasm"/>
    <property type="evidence" value="ECO:0007669"/>
    <property type="project" value="UniProtKB-ARBA"/>
</dbReference>
<dbReference type="GO" id="GO:0003988">
    <property type="term" value="F:acetyl-CoA C-acyltransferase activity"/>
    <property type="evidence" value="ECO:0007669"/>
    <property type="project" value="TreeGrafter"/>
</dbReference>
<dbReference type="GO" id="GO:0006635">
    <property type="term" value="P:fatty acid beta-oxidation"/>
    <property type="evidence" value="ECO:0007669"/>
    <property type="project" value="TreeGrafter"/>
</dbReference>
<dbReference type="GO" id="GO:0010124">
    <property type="term" value="P:phenylacetate catabolic process"/>
    <property type="evidence" value="ECO:0007669"/>
    <property type="project" value="TreeGrafter"/>
</dbReference>
<dbReference type="CDD" id="cd00751">
    <property type="entry name" value="thiolase"/>
    <property type="match status" value="1"/>
</dbReference>
<dbReference type="Gene3D" id="3.40.47.10">
    <property type="match status" value="2"/>
</dbReference>
<dbReference type="InterPro" id="IPR002155">
    <property type="entry name" value="Thiolase"/>
</dbReference>
<dbReference type="InterPro" id="IPR016039">
    <property type="entry name" value="Thiolase-like"/>
</dbReference>
<dbReference type="InterPro" id="IPR050215">
    <property type="entry name" value="Thiolase-like_sf_Thiolase"/>
</dbReference>
<dbReference type="InterPro" id="IPR020617">
    <property type="entry name" value="Thiolase_C"/>
</dbReference>
<dbReference type="InterPro" id="IPR020613">
    <property type="entry name" value="Thiolase_CS"/>
</dbReference>
<dbReference type="InterPro" id="IPR020616">
    <property type="entry name" value="Thiolase_N"/>
</dbReference>
<dbReference type="NCBIfam" id="TIGR01930">
    <property type="entry name" value="AcCoA-C-Actrans"/>
    <property type="match status" value="1"/>
</dbReference>
<dbReference type="PANTHER" id="PTHR43853">
    <property type="entry name" value="3-KETOACYL-COA THIOLASE, PEROXISOMAL"/>
    <property type="match status" value="1"/>
</dbReference>
<dbReference type="PANTHER" id="PTHR43853:SF3">
    <property type="entry name" value="ACETYL-COA C-ACETYLTRANSFERASE YHFS-RELATED"/>
    <property type="match status" value="1"/>
</dbReference>
<dbReference type="Pfam" id="PF02803">
    <property type="entry name" value="Thiolase_C"/>
    <property type="match status" value="1"/>
</dbReference>
<dbReference type="Pfam" id="PF00108">
    <property type="entry name" value="Thiolase_N"/>
    <property type="match status" value="1"/>
</dbReference>
<dbReference type="PIRSF" id="PIRSF000429">
    <property type="entry name" value="Ac-CoA_Ac_transf"/>
    <property type="match status" value="1"/>
</dbReference>
<dbReference type="SUPFAM" id="SSF53901">
    <property type="entry name" value="Thiolase-like"/>
    <property type="match status" value="2"/>
</dbReference>
<dbReference type="PROSITE" id="PS00737">
    <property type="entry name" value="THIOLASE_2"/>
    <property type="match status" value="1"/>
</dbReference>
<organism>
    <name type="scientific">Staphylococcus aureus (strain COL)</name>
    <dbReference type="NCBI Taxonomy" id="93062"/>
    <lineage>
        <taxon>Bacteria</taxon>
        <taxon>Bacillati</taxon>
        <taxon>Bacillota</taxon>
        <taxon>Bacilli</taxon>
        <taxon>Bacillales</taxon>
        <taxon>Staphylococcaceae</taxon>
        <taxon>Staphylococcus</taxon>
    </lineage>
</organism>
<evidence type="ECO:0000250" key="1"/>
<evidence type="ECO:0000305" key="2"/>
<sequence length="379" mass="41022">MNQAVIVAAKRTAFGKYGGTLKHLEPEQLLKPLFQHFKEKYPEVISKIDDVVLGNVVGNGGNIARKALLEAGLKDSIPGVTIDRQCGSGLESVQYACRMIQAGAGKVYIAGGVESTSRAPWKIKRPHSVYETALPEFYERASFAPEMSDPSMIQGAENVAKMYDVSRGLQDEFAYRSHQLTAENVKNGNISQEILPITVKGEIFNTDESLKSHIPKDNFGRFKPVIKGGTVTAANSCMKNDGAVLLLIMEKDMAYELGFEHGLLFKDGVTVGVDSNFPGIGPVPAISNLLKRNQLTIENIEVIEINEAFSAQVVACQQALNISNTQLNIWGGALASGHPYGASGAQLVTRLFYMFDKETMIASMGIGGGLGNAALFTRF</sequence>
<protein>
    <recommendedName>
        <fullName>Putative acetyl-CoA C-acetyltransferase VraB</fullName>
        <ecNumber>2.3.1.-</ecNumber>
    </recommendedName>
</protein>
<name>VRAB_STAAC</name>
<gene>
    <name type="primary">vraB</name>
    <name type="ordered locus">SACOL0622</name>
</gene>
<proteinExistence type="inferred from homology"/>